<keyword id="KW-0067">ATP-binding</keyword>
<keyword id="KW-0963">Cytoplasm</keyword>
<keyword id="KW-0418">Kinase</keyword>
<keyword id="KW-0520">NAD</keyword>
<keyword id="KW-0521">NADP</keyword>
<keyword id="KW-0547">Nucleotide-binding</keyword>
<keyword id="KW-0808">Transferase</keyword>
<protein>
    <recommendedName>
        <fullName evidence="1">NAD kinase</fullName>
        <ecNumber evidence="1">2.7.1.23</ecNumber>
    </recommendedName>
    <alternativeName>
        <fullName evidence="1">ATP-dependent NAD kinase</fullName>
    </alternativeName>
</protein>
<reference key="1">
    <citation type="journal article" date="2008" name="J. Bacteriol.">
        <title>Genome sequence of Lactobacillus helveticus: an organism distinguished by selective gene loss and IS element expansion.</title>
        <authorList>
            <person name="Callanan M."/>
            <person name="Kaleta P."/>
            <person name="O'Callaghan J."/>
            <person name="O'Sullivan O."/>
            <person name="Jordan K."/>
            <person name="McAuliffe O."/>
            <person name="Sangrador-Vegas A."/>
            <person name="Slattery L."/>
            <person name="Fitzgerald G.F."/>
            <person name="Beresford T."/>
            <person name="Ross R.P."/>
        </authorList>
    </citation>
    <scope>NUCLEOTIDE SEQUENCE [LARGE SCALE GENOMIC DNA]</scope>
    <source>
        <strain>DPC 4571</strain>
    </source>
</reference>
<sequence length="270" mass="30742">MKVTIAHNNYDKTLETVAYLKKLLQKKNVIFDAKYPDIVITVGGDGTLINAFHRYENQVDSVRFIGVHTGHLGFYTDWRNYDIDKMVDALLLTKGQPAKYPLLEIKMLTESGDTRYHLAVNESAVKRISHTLEADVYIDDELFENFRGDGLCVSTPTGSTAYSKSLGGAVIHPRLKALQMTEIASINNRVFRTLSAPIVIAPDQWITIVPNVDHFVMTVDGARIDVRNAKKIEYRISKHSIQFDQFGHHHFWSRVQNAFIKDTEDNDKFI</sequence>
<organism>
    <name type="scientific">Lactobacillus helveticus (strain DPC 4571)</name>
    <dbReference type="NCBI Taxonomy" id="405566"/>
    <lineage>
        <taxon>Bacteria</taxon>
        <taxon>Bacillati</taxon>
        <taxon>Bacillota</taxon>
        <taxon>Bacilli</taxon>
        <taxon>Lactobacillales</taxon>
        <taxon>Lactobacillaceae</taxon>
        <taxon>Lactobacillus</taxon>
    </lineage>
</organism>
<proteinExistence type="inferred from homology"/>
<name>NADK_LACH4</name>
<evidence type="ECO:0000255" key="1">
    <source>
        <dbReference type="HAMAP-Rule" id="MF_00361"/>
    </source>
</evidence>
<comment type="function">
    <text evidence="1">Involved in the regulation of the intracellular balance of NAD and NADP, and is a key enzyme in the biosynthesis of NADP. Catalyzes specifically the phosphorylation on 2'-hydroxyl of the adenosine moiety of NAD to yield NADP.</text>
</comment>
<comment type="catalytic activity">
    <reaction evidence="1">
        <text>NAD(+) + ATP = ADP + NADP(+) + H(+)</text>
        <dbReference type="Rhea" id="RHEA:18629"/>
        <dbReference type="ChEBI" id="CHEBI:15378"/>
        <dbReference type="ChEBI" id="CHEBI:30616"/>
        <dbReference type="ChEBI" id="CHEBI:57540"/>
        <dbReference type="ChEBI" id="CHEBI:58349"/>
        <dbReference type="ChEBI" id="CHEBI:456216"/>
        <dbReference type="EC" id="2.7.1.23"/>
    </reaction>
</comment>
<comment type="cofactor">
    <cofactor evidence="1">
        <name>a divalent metal cation</name>
        <dbReference type="ChEBI" id="CHEBI:60240"/>
    </cofactor>
</comment>
<comment type="subcellular location">
    <subcellularLocation>
        <location evidence="1">Cytoplasm</location>
    </subcellularLocation>
</comment>
<comment type="similarity">
    <text evidence="1">Belongs to the NAD kinase family.</text>
</comment>
<accession>A8YUA3</accession>
<feature type="chain" id="PRO_1000072084" description="NAD kinase">
    <location>
        <begin position="1"/>
        <end position="270"/>
    </location>
</feature>
<feature type="active site" description="Proton acceptor" evidence="1">
    <location>
        <position position="45"/>
    </location>
</feature>
<feature type="binding site" evidence="1">
    <location>
        <begin position="45"/>
        <end position="46"/>
    </location>
    <ligand>
        <name>NAD(+)</name>
        <dbReference type="ChEBI" id="CHEBI:57540"/>
    </ligand>
</feature>
<feature type="binding site" evidence="1">
    <location>
        <begin position="121"/>
        <end position="122"/>
    </location>
    <ligand>
        <name>NAD(+)</name>
        <dbReference type="ChEBI" id="CHEBI:57540"/>
    </ligand>
</feature>
<feature type="binding site" evidence="1">
    <location>
        <position position="147"/>
    </location>
    <ligand>
        <name>NAD(+)</name>
        <dbReference type="ChEBI" id="CHEBI:57540"/>
    </ligand>
</feature>
<feature type="binding site" evidence="1">
    <location>
        <position position="149"/>
    </location>
    <ligand>
        <name>NAD(+)</name>
        <dbReference type="ChEBI" id="CHEBI:57540"/>
    </ligand>
</feature>
<feature type="binding site" evidence="1">
    <location>
        <begin position="160"/>
        <end position="165"/>
    </location>
    <ligand>
        <name>NAD(+)</name>
        <dbReference type="ChEBI" id="CHEBI:57540"/>
    </ligand>
</feature>
<feature type="binding site" evidence="1">
    <location>
        <position position="184"/>
    </location>
    <ligand>
        <name>NAD(+)</name>
        <dbReference type="ChEBI" id="CHEBI:57540"/>
    </ligand>
</feature>
<dbReference type="EC" id="2.7.1.23" evidence="1"/>
<dbReference type="EMBL" id="CP000517">
    <property type="protein sequence ID" value="ABX26841.1"/>
    <property type="molecule type" value="Genomic_DNA"/>
</dbReference>
<dbReference type="RefSeq" id="WP_012211595.1">
    <property type="nucleotide sequence ID" value="NC_010080.1"/>
</dbReference>
<dbReference type="SMR" id="A8YUA3"/>
<dbReference type="KEGG" id="lhe:lhv_0694"/>
<dbReference type="eggNOG" id="COG0061">
    <property type="taxonomic scope" value="Bacteria"/>
</dbReference>
<dbReference type="HOGENOM" id="CLU_008831_0_3_9"/>
<dbReference type="Proteomes" id="UP000000790">
    <property type="component" value="Chromosome"/>
</dbReference>
<dbReference type="GO" id="GO:0005737">
    <property type="term" value="C:cytoplasm"/>
    <property type="evidence" value="ECO:0007669"/>
    <property type="project" value="UniProtKB-SubCell"/>
</dbReference>
<dbReference type="GO" id="GO:0005524">
    <property type="term" value="F:ATP binding"/>
    <property type="evidence" value="ECO:0007669"/>
    <property type="project" value="UniProtKB-KW"/>
</dbReference>
<dbReference type="GO" id="GO:0046872">
    <property type="term" value="F:metal ion binding"/>
    <property type="evidence" value="ECO:0007669"/>
    <property type="project" value="UniProtKB-UniRule"/>
</dbReference>
<dbReference type="GO" id="GO:0051287">
    <property type="term" value="F:NAD binding"/>
    <property type="evidence" value="ECO:0007669"/>
    <property type="project" value="UniProtKB-ARBA"/>
</dbReference>
<dbReference type="GO" id="GO:0003951">
    <property type="term" value="F:NAD+ kinase activity"/>
    <property type="evidence" value="ECO:0007669"/>
    <property type="project" value="UniProtKB-UniRule"/>
</dbReference>
<dbReference type="GO" id="GO:0019674">
    <property type="term" value="P:NAD metabolic process"/>
    <property type="evidence" value="ECO:0007669"/>
    <property type="project" value="InterPro"/>
</dbReference>
<dbReference type="GO" id="GO:0006741">
    <property type="term" value="P:NADP biosynthetic process"/>
    <property type="evidence" value="ECO:0007669"/>
    <property type="project" value="UniProtKB-UniRule"/>
</dbReference>
<dbReference type="Gene3D" id="3.40.50.10330">
    <property type="entry name" value="Probable inorganic polyphosphate/atp-NAD kinase, domain 1"/>
    <property type="match status" value="1"/>
</dbReference>
<dbReference type="Gene3D" id="2.60.200.30">
    <property type="entry name" value="Probable inorganic polyphosphate/atp-NAD kinase, domain 2"/>
    <property type="match status" value="1"/>
</dbReference>
<dbReference type="HAMAP" id="MF_00361">
    <property type="entry name" value="NAD_kinase"/>
    <property type="match status" value="1"/>
</dbReference>
<dbReference type="InterPro" id="IPR017438">
    <property type="entry name" value="ATP-NAD_kinase_N"/>
</dbReference>
<dbReference type="InterPro" id="IPR017437">
    <property type="entry name" value="ATP-NAD_kinase_PpnK-typ_C"/>
</dbReference>
<dbReference type="InterPro" id="IPR016064">
    <property type="entry name" value="NAD/diacylglycerol_kinase_sf"/>
</dbReference>
<dbReference type="InterPro" id="IPR002504">
    <property type="entry name" value="NADK"/>
</dbReference>
<dbReference type="NCBIfam" id="NF003424">
    <property type="entry name" value="PRK04885.1"/>
    <property type="match status" value="1"/>
</dbReference>
<dbReference type="PANTHER" id="PTHR20275">
    <property type="entry name" value="NAD KINASE"/>
    <property type="match status" value="1"/>
</dbReference>
<dbReference type="PANTHER" id="PTHR20275:SF0">
    <property type="entry name" value="NAD KINASE"/>
    <property type="match status" value="1"/>
</dbReference>
<dbReference type="Pfam" id="PF01513">
    <property type="entry name" value="NAD_kinase"/>
    <property type="match status" value="1"/>
</dbReference>
<dbReference type="Pfam" id="PF20143">
    <property type="entry name" value="NAD_kinase_C"/>
    <property type="match status" value="1"/>
</dbReference>
<dbReference type="SUPFAM" id="SSF111331">
    <property type="entry name" value="NAD kinase/diacylglycerol kinase-like"/>
    <property type="match status" value="1"/>
</dbReference>
<gene>
    <name evidence="1" type="primary">nadK</name>
    <name type="ordered locus">lhv_0694</name>
</gene>